<keyword id="KW-0903">Direct protein sequencing</keyword>
<keyword id="KW-0494">Milk protein</keyword>
<keyword id="KW-0597">Phosphoprotein</keyword>
<keyword id="KW-1185">Reference proteome</keyword>
<keyword id="KW-0964">Secreted</keyword>
<sequence length="202" mass="24406">RPKLPHRHPEIIQNEQDSREKVLKERKFPSFALHTPREEYINELNRQRELLKEKQKDEHKEYLIEDPEQQESSSTSSSEEVVPINTEQKRIPREDMLYQHTLEQLRRLSKYNQLQLQAIYAQEQLIRMKENSQRKPMRVVNQEQAYFYLEPFQPSYQLDVYPYAAWFHPAQIMQHVAYSPFHDTAKLIASENSEKTDIIPEW</sequence>
<evidence type="ECO:0000250" key="1">
    <source>
        <dbReference type="UniProtKB" id="O97943"/>
    </source>
</evidence>
<evidence type="ECO:0000250" key="2">
    <source>
        <dbReference type="UniProtKB" id="P02662"/>
    </source>
</evidence>
<evidence type="ECO:0000250" key="3">
    <source>
        <dbReference type="UniProtKB" id="P04653"/>
    </source>
</evidence>
<evidence type="ECO:0000250" key="4">
    <source>
        <dbReference type="UniProtKB" id="P47710"/>
    </source>
</evidence>
<evidence type="ECO:0000255" key="5"/>
<evidence type="ECO:0000256" key="6">
    <source>
        <dbReference type="SAM" id="MobiDB-lite"/>
    </source>
</evidence>
<evidence type="ECO:0000269" key="7">
    <source>
    </source>
</evidence>
<evidence type="ECO:0000303" key="8">
    <source>
    </source>
</evidence>
<evidence type="ECO:0000305" key="9"/>
<gene>
    <name evidence="4" type="primary">CSN1S1</name>
</gene>
<dbReference type="SMR" id="P86272"/>
<dbReference type="Proteomes" id="UP000694387">
    <property type="component" value="Unplaced"/>
</dbReference>
<dbReference type="GO" id="GO:0005615">
    <property type="term" value="C:extracellular space"/>
    <property type="evidence" value="ECO:0007669"/>
    <property type="project" value="TreeGrafter"/>
</dbReference>
<dbReference type="GO" id="GO:1903496">
    <property type="term" value="P:response to 11-deoxycorticosterone"/>
    <property type="evidence" value="ECO:0007669"/>
    <property type="project" value="TreeGrafter"/>
</dbReference>
<dbReference type="GO" id="GO:1903494">
    <property type="term" value="P:response to dehydroepiandrosterone"/>
    <property type="evidence" value="ECO:0007669"/>
    <property type="project" value="TreeGrafter"/>
</dbReference>
<dbReference type="GO" id="GO:0032355">
    <property type="term" value="P:response to estradiol"/>
    <property type="evidence" value="ECO:0007669"/>
    <property type="project" value="TreeGrafter"/>
</dbReference>
<dbReference type="GO" id="GO:0032570">
    <property type="term" value="P:response to progesterone"/>
    <property type="evidence" value="ECO:0007669"/>
    <property type="project" value="TreeGrafter"/>
</dbReference>
<dbReference type="InterPro" id="IPR026999">
    <property type="entry name" value="Alpha-s1_casein"/>
</dbReference>
<dbReference type="InterPro" id="IPR001588">
    <property type="entry name" value="Casein"/>
</dbReference>
<dbReference type="PANTHER" id="PTHR10240">
    <property type="entry name" value="ALPHA-S1-CASEIN"/>
    <property type="match status" value="1"/>
</dbReference>
<dbReference type="PANTHER" id="PTHR10240:SF0">
    <property type="entry name" value="ALPHA-S1-CASEIN"/>
    <property type="match status" value="1"/>
</dbReference>
<dbReference type="Pfam" id="PF00363">
    <property type="entry name" value="Casein"/>
    <property type="match status" value="1"/>
</dbReference>
<reference evidence="9" key="1">
    <citation type="journal article" date="2009" name="J. Mass Spectrom.">
        <title>Sequence determination of alphas1-casein isoforms from donkey by mass spectrometric methods.</title>
        <authorList>
            <person name="Cunsolo V."/>
            <person name="Cairone E."/>
            <person name="Fontanini D."/>
            <person name="Criscione A."/>
            <person name="Muccilli V."/>
            <person name="Saletti R."/>
            <person name="Foti S."/>
        </authorList>
    </citation>
    <scope>PROTEIN SEQUENCE</scope>
    <scope>MASS SPECTROMETRY</scope>
    <scope>VARIANT A1 GLN-88 DEL</scope>
    <scope>VARIANT B 34-HIS--GLU-38 DEL</scope>
    <scope>VARIANTS B1 34-HIS--GLU-38 DEL AND GLN-88 DEL</scope>
    <source>
        <strain evidence="7">Ragusana</strain>
        <tissue evidence="7">Milk</tissue>
    </source>
</reference>
<accession>P86272</accession>
<protein>
    <recommendedName>
        <fullName evidence="8">Alpha-S1-casein</fullName>
    </recommendedName>
</protein>
<organism>
    <name type="scientific">Equus asinus</name>
    <name type="common">Donkey</name>
    <name type="synonym">Equus africanus asinus</name>
    <dbReference type="NCBI Taxonomy" id="9793"/>
    <lineage>
        <taxon>Eukaryota</taxon>
        <taxon>Metazoa</taxon>
        <taxon>Chordata</taxon>
        <taxon>Craniata</taxon>
        <taxon>Vertebrata</taxon>
        <taxon>Euteleostomi</taxon>
        <taxon>Mammalia</taxon>
        <taxon>Eutheria</taxon>
        <taxon>Laurasiatheria</taxon>
        <taxon>Perissodactyla</taxon>
        <taxon>Equidae</taxon>
        <taxon>Equus</taxon>
    </lineage>
</organism>
<name>CASA1_EQUAS</name>
<feature type="chain" id="PRO_0000376022" description="Alpha-S1-casein">
    <location>
        <begin position="1"/>
        <end position="202"/>
    </location>
</feature>
<feature type="region of interest" description="Disordered" evidence="6">
    <location>
        <begin position="1"/>
        <end position="25"/>
    </location>
</feature>
<feature type="region of interest" description="Disordered" evidence="6">
    <location>
        <begin position="51"/>
        <end position="84"/>
    </location>
</feature>
<feature type="compositionally biased region" description="Basic and acidic residues" evidence="6">
    <location>
        <begin position="16"/>
        <end position="25"/>
    </location>
</feature>
<feature type="compositionally biased region" description="Basic and acidic residues" evidence="6">
    <location>
        <begin position="51"/>
        <end position="63"/>
    </location>
</feature>
<feature type="compositionally biased region" description="Low complexity" evidence="6">
    <location>
        <begin position="70"/>
        <end position="80"/>
    </location>
</feature>
<feature type="modified residue" description="Phosphoserine" evidence="1">
    <location>
        <position position="18"/>
    </location>
</feature>
<feature type="modified residue" description="Phosphoserine" evidence="1">
    <location>
        <position position="72"/>
    </location>
</feature>
<feature type="modified residue" description="Phosphoserine" evidence="4">
    <location>
        <position position="73"/>
    </location>
</feature>
<feature type="modified residue" description="Phosphoserine" evidence="3">
    <location>
        <position position="74"/>
    </location>
</feature>
<feature type="modified residue" description="Phosphoserine" evidence="3">
    <location>
        <position position="76"/>
    </location>
</feature>
<feature type="modified residue" description="Phosphoserine" evidence="2">
    <location>
        <position position="77"/>
    </location>
</feature>
<feature type="modified residue" description="Phosphoserine" evidence="3">
    <location>
        <position position="78"/>
    </location>
</feature>
<feature type="sequence variant" description="In B and B1." evidence="7">
    <location>
        <begin position="34"/>
        <end position="38"/>
    </location>
</feature>
<feature type="sequence variant" description="In A1 and B1." evidence="7">
    <location>
        <position position="88"/>
    </location>
</feature>
<proteinExistence type="evidence at protein level"/>
<comment type="function">
    <text evidence="9">Important role in the capacity of milk to transport calcium phosphate.</text>
</comment>
<comment type="subcellular location">
    <subcellularLocation>
        <location evidence="9">Secreted</location>
    </subcellularLocation>
</comment>
<comment type="tissue specificity">
    <text evidence="9">Mammary gland specific. Secreted in milk.</text>
</comment>
<comment type="mass spectrometry" mass="24406.0" method="MALDI" evidence="7">
    <text>Variant A.</text>
</comment>
<comment type="mass spectrometry" mass="24278.0" method="MALDI" evidence="7">
    <text>Variant A1.</text>
</comment>
<comment type="mass spectrometry" mass="23786.0" method="MALDI" evidence="7">
    <text>Variant B.</text>
</comment>
<comment type="mass spectrometry" mass="23658.0" method="MALDI" evidence="7">
    <text>Variant B1.</text>
</comment>
<comment type="miscellaneous">
    <text evidence="7">The sequence of variant A is shown.</text>
</comment>
<comment type="similarity">
    <text evidence="5">Belongs to the alpha-casein family.</text>
</comment>